<proteinExistence type="evidence at protein level"/>
<organism>
    <name type="scientific">Canis lupus familiaris</name>
    <name type="common">Dog</name>
    <name type="synonym">Canis familiaris</name>
    <dbReference type="NCBI Taxonomy" id="9615"/>
    <lineage>
        <taxon>Eukaryota</taxon>
        <taxon>Metazoa</taxon>
        <taxon>Chordata</taxon>
        <taxon>Craniata</taxon>
        <taxon>Vertebrata</taxon>
        <taxon>Euteleostomi</taxon>
        <taxon>Mammalia</taxon>
        <taxon>Eutheria</taxon>
        <taxon>Laurasiatheria</taxon>
        <taxon>Carnivora</taxon>
        <taxon>Caniformia</taxon>
        <taxon>Canidae</taxon>
        <taxon>Canis</taxon>
    </lineage>
</organism>
<feature type="signal peptide" evidence="2">
    <location>
        <begin position="1"/>
        <end position="15"/>
    </location>
</feature>
<feature type="propeptide" id="PRO_0000027475" evidence="5">
    <location>
        <begin position="16"/>
        <end position="30"/>
    </location>
</feature>
<feature type="chain" id="PRO_0000027476" description="Mastin">
    <location>
        <begin position="31"/>
        <end position="280"/>
    </location>
</feature>
<feature type="domain" description="Peptidase S1" evidence="3">
    <location>
        <begin position="31"/>
        <end position="275"/>
    </location>
</feature>
<feature type="active site" description="Charge relay system" evidence="1">
    <location>
        <position position="77"/>
    </location>
</feature>
<feature type="active site" description="Charge relay system" evidence="1">
    <location>
        <position position="127"/>
    </location>
</feature>
<feature type="active site" description="Charge relay system" evidence="1">
    <location>
        <position position="228"/>
    </location>
</feature>
<feature type="glycosylation site" description="N-linked (GlcNAc...) asparagine" evidence="2">
    <location>
        <position position="106"/>
    </location>
</feature>
<feature type="glycosylation site" description="N-linked (GlcNAc...) asparagine" evidence="2">
    <location>
        <position position="117"/>
    </location>
</feature>
<feature type="disulfide bond" evidence="3">
    <location>
        <begin position="62"/>
        <end position="78"/>
    </location>
</feature>
<feature type="disulfide bond" evidence="3">
    <location>
        <begin position="161"/>
        <end position="234"/>
    </location>
</feature>
<feature type="disulfide bond" evidence="3">
    <location>
        <begin position="194"/>
        <end position="215"/>
    </location>
</feature>
<feature type="disulfide bond" evidence="3">
    <location>
        <begin position="224"/>
        <end position="252"/>
    </location>
</feature>
<feature type="sequence conflict" description="In Ref. 1; AAU06207." evidence="7" ref="1">
    <original>W</original>
    <variation>R</variation>
    <location>
        <position position="123"/>
    </location>
</feature>
<feature type="sequence conflict" description="In Ref. 2; AAA30855." evidence="7" ref="2">
    <original>S</original>
    <variation>T</variation>
    <location>
        <position position="125"/>
    </location>
</feature>
<feature type="sequence conflict" description="In Ref. 1; AAU06207." evidence="7" ref="1">
    <original>K</original>
    <variation>R</variation>
    <location>
        <position position="132"/>
    </location>
</feature>
<dbReference type="EC" id="3.4.21.-"/>
<dbReference type="EMBL" id="AY665677">
    <property type="protein sequence ID" value="AAU06206.1"/>
    <property type="molecule type" value="mRNA"/>
</dbReference>
<dbReference type="EMBL" id="AY665678">
    <property type="protein sequence ID" value="AAU06207.1"/>
    <property type="molecule type" value="Genomic_DNA"/>
</dbReference>
<dbReference type="EMBL" id="M24665">
    <property type="protein sequence ID" value="AAA30855.2"/>
    <property type="molecule type" value="mRNA"/>
</dbReference>
<dbReference type="PIR" id="B32410">
    <property type="entry name" value="B32410"/>
</dbReference>
<dbReference type="RefSeq" id="NP_001005260.1">
    <property type="nucleotide sequence ID" value="NM_001005260.1"/>
</dbReference>
<dbReference type="SMR" id="P19236"/>
<dbReference type="FunCoup" id="P19236">
    <property type="interactions" value="11"/>
</dbReference>
<dbReference type="STRING" id="9615.ENSCAFP00000028974"/>
<dbReference type="MEROPS" id="S01.145"/>
<dbReference type="PaxDb" id="9612-ENSCAFP00000028974"/>
<dbReference type="GeneID" id="448801"/>
<dbReference type="KEGG" id="cfa:448801"/>
<dbReference type="eggNOG" id="KOG3627">
    <property type="taxonomic scope" value="Eukaryota"/>
</dbReference>
<dbReference type="InParanoid" id="P19236"/>
<dbReference type="OrthoDB" id="3713at33554"/>
<dbReference type="Proteomes" id="UP000002254">
    <property type="component" value="Unplaced"/>
</dbReference>
<dbReference type="Proteomes" id="UP000694429">
    <property type="component" value="Unplaced"/>
</dbReference>
<dbReference type="Proteomes" id="UP000694542">
    <property type="component" value="Unplaced"/>
</dbReference>
<dbReference type="Proteomes" id="UP000805418">
    <property type="component" value="Unplaced"/>
</dbReference>
<dbReference type="GO" id="GO:0005737">
    <property type="term" value="C:cytoplasm"/>
    <property type="evidence" value="ECO:0007669"/>
    <property type="project" value="UniProtKB-SubCell"/>
</dbReference>
<dbReference type="GO" id="GO:0005615">
    <property type="term" value="C:extracellular space"/>
    <property type="evidence" value="ECO:0000318"/>
    <property type="project" value="GO_Central"/>
</dbReference>
<dbReference type="GO" id="GO:0004252">
    <property type="term" value="F:serine-type endopeptidase activity"/>
    <property type="evidence" value="ECO:0000318"/>
    <property type="project" value="GO_Central"/>
</dbReference>
<dbReference type="GO" id="GO:0006508">
    <property type="term" value="P:proteolysis"/>
    <property type="evidence" value="ECO:0000318"/>
    <property type="project" value="GO_Central"/>
</dbReference>
<dbReference type="CDD" id="cd00190">
    <property type="entry name" value="Tryp_SPc"/>
    <property type="match status" value="1"/>
</dbReference>
<dbReference type="FunFam" id="2.40.10.10:FF:000068">
    <property type="entry name" value="transmembrane protease serine 2"/>
    <property type="match status" value="1"/>
</dbReference>
<dbReference type="FunFam" id="2.40.10.10:FF:000016">
    <property type="entry name" value="Tryptase beta-2"/>
    <property type="match status" value="1"/>
</dbReference>
<dbReference type="Gene3D" id="2.40.10.10">
    <property type="entry name" value="Trypsin-like serine proteases"/>
    <property type="match status" value="2"/>
</dbReference>
<dbReference type="InterPro" id="IPR009003">
    <property type="entry name" value="Peptidase_S1_PA"/>
</dbReference>
<dbReference type="InterPro" id="IPR043504">
    <property type="entry name" value="Peptidase_S1_PA_chymotrypsin"/>
</dbReference>
<dbReference type="InterPro" id="IPR001314">
    <property type="entry name" value="Peptidase_S1A"/>
</dbReference>
<dbReference type="InterPro" id="IPR001254">
    <property type="entry name" value="Trypsin_dom"/>
</dbReference>
<dbReference type="InterPro" id="IPR018114">
    <property type="entry name" value="TRYPSIN_HIS"/>
</dbReference>
<dbReference type="PANTHER" id="PTHR24253:SF144">
    <property type="entry name" value="CHYMOTRYPSIN-LIKE PROTEASE CTRL-1-RELATED"/>
    <property type="match status" value="1"/>
</dbReference>
<dbReference type="PANTHER" id="PTHR24253">
    <property type="entry name" value="TRANSMEMBRANE PROTEASE SERINE"/>
    <property type="match status" value="1"/>
</dbReference>
<dbReference type="Pfam" id="PF00089">
    <property type="entry name" value="Trypsin"/>
    <property type="match status" value="1"/>
</dbReference>
<dbReference type="PRINTS" id="PR00722">
    <property type="entry name" value="CHYMOTRYPSIN"/>
</dbReference>
<dbReference type="SMART" id="SM00020">
    <property type="entry name" value="Tryp_SPc"/>
    <property type="match status" value="1"/>
</dbReference>
<dbReference type="SUPFAM" id="SSF50494">
    <property type="entry name" value="Trypsin-like serine proteases"/>
    <property type="match status" value="1"/>
</dbReference>
<dbReference type="PROSITE" id="PS50240">
    <property type="entry name" value="TRYPSIN_DOM"/>
    <property type="match status" value="1"/>
</dbReference>
<dbReference type="PROSITE" id="PS00134">
    <property type="entry name" value="TRYPSIN_HIS"/>
    <property type="match status" value="1"/>
</dbReference>
<comment type="function">
    <text evidence="4">Trypsin-like serine protease. Has a preference for extended substrates with basic residues at the P1 position; Arg is preferred over Lys. Active towards calcitonin gene-related peptide and gelatin. Not active towards substance P, vasoactive intestinal peptide, type I collagen or azocasein.</text>
</comment>
<comment type="activity regulation">
    <text evidence="5">Inhibited by leupeptin and bis(5-amidino-2-benzimidazolyl)methane (BABIM).</text>
</comment>
<comment type="biophysicochemical properties">
    <phDependence>
        <text>Optimum pH is 8.0-8.5.</text>
    </phDependence>
</comment>
<comment type="subunit">
    <text evidence="4 5">Oligomer; disulfide-linked.</text>
</comment>
<comment type="subcellular location">
    <subcellularLocation>
        <location evidence="6">Cytoplasm</location>
    </subcellularLocation>
</comment>
<comment type="tissue specificity">
    <text evidence="6">Mononuclear cells within skin, intestine, trachea and lung parenchyma, and polymorphonuclear leukocytes within capillaries and blood.</text>
</comment>
<comment type="PTM">
    <text evidence="5">N-glycosylated.</text>
</comment>
<comment type="similarity">
    <text evidence="3">Belongs to the peptidase S1 family.</text>
</comment>
<accession>P19236</accession>
<accession>Q66NX5</accession>
<accession>Q66NX6</accession>
<keyword id="KW-0963">Cytoplasm</keyword>
<keyword id="KW-0903">Direct protein sequencing</keyword>
<keyword id="KW-1015">Disulfide bond</keyword>
<keyword id="KW-0325">Glycoprotein</keyword>
<keyword id="KW-0378">Hydrolase</keyword>
<keyword id="KW-0645">Protease</keyword>
<keyword id="KW-1185">Reference proteome</keyword>
<keyword id="KW-0720">Serine protease</keyword>
<keyword id="KW-0732">Signal</keyword>
<keyword id="KW-0865">Zymogen</keyword>
<sequence>MLWLLVLTAPWLGGSVPISPDPGLRHEQVGIVGGCKVPARRYPWQVSLRFHGMGSGQWQHICGGSLIHPQWVLTAAHCVELEGLEAATLRVQVGQLRLYDHDQLCNVTEIIRHPNFNMSWYGWDSADIALLKLEAPLTLSEDVNLVSLPSPSLIVPPGMLCWVTGWGDIADHTPLPPPYHLQEVEVPIVGNRECNCHYQTILEQDDEVIKQDMLCAGSEGHDSCQMDSGGPLVCRWKCTWIQVGVVSWGYGCGYNLPGVYARVTSYVSWIHQHIPLSPGP</sequence>
<reference key="1">
    <citation type="journal article" date="2005" name="Arch. Biochem. Biophys.">
        <title>Mastin is a gelatinolytic mast cell peptidase resembling a mini-proteasome.</title>
        <authorList>
            <person name="Raymond W.W."/>
            <person name="Sommerhoff C.P."/>
            <person name="Caughey G.H."/>
        </authorList>
    </citation>
    <scope>NUCLEOTIDE SEQUENCE [GENOMIC DNA / MRNA]</scope>
    <scope>FUNCTION</scope>
    <scope>SUBUNIT</scope>
    <source>
        <tissue>Lung</tissue>
    </source>
</reference>
<reference key="2">
    <citation type="journal article" date="1989" name="Biochemistry">
        <title>Molecular cloning of dog mast cell tryptase and a related protease: structural evidence of a unique mode of serine protease activation.</title>
        <authorList>
            <person name="Vanderslice P."/>
            <person name="Craik C.S."/>
            <person name="Nadel J.A."/>
            <person name="Caughey G.H."/>
        </authorList>
    </citation>
    <scope>NUCLEOTIDE SEQUENCE [MRNA] OF 30-280</scope>
    <source>
        <tissue>Mastocytoma</tissue>
    </source>
</reference>
<reference key="3">
    <citation type="submission" date="1999-03" db="EMBL/GenBank/DDBJ databases">
        <authorList>
            <person name="Caughey G.H."/>
        </authorList>
    </citation>
    <scope>SEQUENCE REVISION TO N-TERMINUS</scope>
</reference>
<reference key="4">
    <citation type="journal article" date="1995" name="J. Biol. Chem.">
        <title>Purification and characterization of dog mast cell protease-3, an oligomeric relative of tryptases.</title>
        <authorList>
            <person name="Raymond W.W."/>
            <person name="Tam E.K."/>
            <person name="Blount J.L."/>
            <person name="Caughey G.H."/>
        </authorList>
    </citation>
    <scope>PROTEIN SEQUENCE OF 31-42</scope>
    <scope>CATALYTIC ACTIVITY</scope>
    <scope>ACTIVITY REGULATION</scope>
    <scope>SUBUNIT</scope>
    <scope>GLYCOSYLATION</scope>
    <source>
        <tissue>Mastocytoma</tissue>
    </source>
</reference>
<reference key="5">
    <citation type="journal article" date="1994" name="J. Immunol.">
        <title>Mast cell and neutrophil expression of dog mast cell protease-3. A novel tryptase-related serine protease.</title>
        <authorList>
            <person name="Yezzi M.J."/>
            <person name="Hsieh I.E."/>
            <person name="Caughey G.H."/>
        </authorList>
    </citation>
    <scope>SUBCELLULAR LOCATION</scope>
    <scope>TISSUE SPECIFICITY</scope>
</reference>
<evidence type="ECO:0000250" key="1"/>
<evidence type="ECO:0000255" key="2"/>
<evidence type="ECO:0000255" key="3">
    <source>
        <dbReference type="PROSITE-ProRule" id="PRU00274"/>
    </source>
</evidence>
<evidence type="ECO:0000269" key="4">
    <source>
    </source>
</evidence>
<evidence type="ECO:0000269" key="5">
    <source>
    </source>
</evidence>
<evidence type="ECO:0000269" key="6">
    <source>
    </source>
</evidence>
<evidence type="ECO:0000305" key="7"/>
<name>TRYM_CANLF</name>
<protein>
    <recommendedName>
        <fullName>Mastin</fullName>
        <ecNumber>3.4.21.-</ecNumber>
    </recommendedName>
    <alternativeName>
        <fullName>Mast cell protease 3</fullName>
        <shortName>DMP</shortName>
        <shortName>MCP-3</shortName>
        <shortName>dMCP-3</shortName>
    </alternativeName>
    <alternativeName>
        <fullName>Mastocytoma protease</fullName>
    </alternativeName>
</protein>